<name>NST1_YEAST</name>
<sequence>MPPNSKSKRRKNKSKQHNKKNGNSDPEQSINPTQLVPRMEPELYHTESDYPTSRVIKRAPNGDVIVEPINTDDDKKERTANLTHNKDSMDSASSLAFTLDSHWESLSPEEKKTILRIEKEEVFNVIRNYQDDHSCSCSVCGRRHLAMDQEMERIYNTLYAMDKDKDPETNPIKFHLGIIKELQISKNQQQNDLSSTKGEVVKNFLSSSTVGSLKEEVLHFKQKQLSKQEQAHNETADNTSLLEENLNNIHINKTSSEISANFNSVSDEELQQKYSNFTKTFISSHPKIAEEYVQKMMMYPNIRALTDDLMNSNGQGFLNAIEDFVRDGQIQASKKDDSITEDEASSTDLTDPKEFTTMLHSGKPLTEDEYADLQRNIAERMTNAYDTASKKFKDVSQLEKELFTRFMSGRDKKSFRELIIQSFKNKFDGELGPSVLAATLSSCFSSQSKDTSLDTDSIYEDEDEEDYDDYSEYAEDSEEVSEYEGIEAVEKPEHDEKSNGIRETLHLSYDHDHKRQNHPHHHYHSTSTHSEDELSEEEYISDIELPHDPHKHFHRDDDILDGDEDEPEEEDENEGDDEEDTYDSGLDETDRLEEGRKLIQIAITKLLQSRIMASYHEKQADNNRLKLLQELEEEKRKKREKEEKKQKKREKEKEKKRLQQLAKEEEKRKREEEKERLKKELEEREMRRREAQRKKVEEAKRKKDEERKRRLEEQQRREEMQEKQRKQKEELKRKREEEKKRIREQKRLEQEKLQKEKEEEERQRLIAEDALRKQKLNEEQTSANILSAKPFTENGVGNPVSSQSHPNMTNYQEDNSCSINDEILKMVNSVAASKPVSPTGFNVHDLLLPSTNNQMPAMEQSHLPQPGNQNNHFGTTTIPNALDLATKSSLQTENNYLMNSQTLENTSLLMHNNSSPTKLLPNDFGLSSWGGLTNTMSINPTCKPPVIQTSEMESQAHKSSPQATMPSFGLPNGGTHRKSFTDELNTLTSMLSSSGFADTSLSSSGFPPSQRSVWNDQKSSFSGPSTAGNFNNSSIQSGMLLAPTLGSVESFPNRTSIWDSSTTPMMNKSELSGRNITSTAQDSPAFMASNIWSSNSQYNSPYLTSNVLQSPQISSGVDESHILDSIYNTYLAISPQDSLNPYIAIGTLFQNLVGLNLDYSTFINKLISMQGAYNCEFFTDNNGSITHVRFARQTPAGHSKGLLNQLFSGLNDPTATPFTSRPHTSTRASFPIASSTTQTS</sequence>
<protein>
    <recommendedName>
        <fullName>Stress response protein NST1</fullName>
    </recommendedName>
    <alternativeName>
        <fullName>Negatively-affecting salt tolerance protein 1</fullName>
    </alternativeName>
</protein>
<organism>
    <name type="scientific">Saccharomyces cerevisiae (strain ATCC 204508 / S288c)</name>
    <name type="common">Baker's yeast</name>
    <dbReference type="NCBI Taxonomy" id="559292"/>
    <lineage>
        <taxon>Eukaryota</taxon>
        <taxon>Fungi</taxon>
        <taxon>Dikarya</taxon>
        <taxon>Ascomycota</taxon>
        <taxon>Saccharomycotina</taxon>
        <taxon>Saccharomycetes</taxon>
        <taxon>Saccharomycetales</taxon>
        <taxon>Saccharomycetaceae</taxon>
        <taxon>Saccharomyces</taxon>
    </lineage>
</organism>
<feature type="chain" id="PRO_0000203442" description="Stress response protein NST1">
    <location>
        <begin position="1"/>
        <end position="1240"/>
    </location>
</feature>
<feature type="region of interest" description="Disordered" evidence="2">
    <location>
        <begin position="1"/>
        <end position="76"/>
    </location>
</feature>
<feature type="region of interest" description="Disordered" evidence="2">
    <location>
        <begin position="446"/>
        <end position="593"/>
    </location>
</feature>
<feature type="region of interest" description="Disordered" evidence="2">
    <location>
        <begin position="634"/>
        <end position="744"/>
    </location>
</feature>
<feature type="region of interest" description="Disordered" evidence="2">
    <location>
        <begin position="951"/>
        <end position="980"/>
    </location>
</feature>
<feature type="region of interest" description="Disordered" evidence="2">
    <location>
        <begin position="998"/>
        <end position="1029"/>
    </location>
</feature>
<feature type="region of interest" description="Disordered" evidence="2">
    <location>
        <begin position="1214"/>
        <end position="1240"/>
    </location>
</feature>
<feature type="coiled-coil region" evidence="1">
    <location>
        <begin position="616"/>
        <end position="777"/>
    </location>
</feature>
<feature type="compositionally biased region" description="Basic residues" evidence="2">
    <location>
        <begin position="1"/>
        <end position="20"/>
    </location>
</feature>
<feature type="compositionally biased region" description="Polar residues" evidence="2">
    <location>
        <begin position="25"/>
        <end position="34"/>
    </location>
</feature>
<feature type="compositionally biased region" description="Basic and acidic residues" evidence="2">
    <location>
        <begin position="39"/>
        <end position="48"/>
    </location>
</feature>
<feature type="compositionally biased region" description="Acidic residues" evidence="2">
    <location>
        <begin position="457"/>
        <end position="487"/>
    </location>
</feature>
<feature type="compositionally biased region" description="Basic and acidic residues" evidence="2">
    <location>
        <begin position="488"/>
        <end position="513"/>
    </location>
</feature>
<feature type="compositionally biased region" description="Basic residues" evidence="2">
    <location>
        <begin position="514"/>
        <end position="524"/>
    </location>
</feature>
<feature type="compositionally biased region" description="Acidic residues" evidence="2">
    <location>
        <begin position="558"/>
        <end position="587"/>
    </location>
</feature>
<feature type="compositionally biased region" description="Polar residues" evidence="2">
    <location>
        <begin position="951"/>
        <end position="965"/>
    </location>
</feature>
<feature type="modified residue" description="Phosphoserine" evidence="8 9">
    <location>
        <position position="266"/>
    </location>
</feature>
<feature type="sequence variant" description="In strain: SK1." evidence="6">
    <original>D</original>
    <variation>A</variation>
    <location>
        <position position="162"/>
    </location>
</feature>
<feature type="sequence variant" description="In strain: SK1." evidence="6">
    <original>S</original>
    <variation>G</variation>
    <location>
        <position position="208"/>
    </location>
</feature>
<feature type="sequence variant" description="In strain: SK1." evidence="6">
    <original>E</original>
    <variation>D</variation>
    <location>
        <position position="354"/>
    </location>
</feature>
<feature type="sequence variant" description="In strain: SK1." evidence="6">
    <original>N</original>
    <variation>D</variation>
    <location>
        <position position="899"/>
    </location>
</feature>
<dbReference type="EMBL" id="DQ115393">
    <property type="protein sequence ID" value="AAZ22517.1"/>
    <property type="molecule type" value="Genomic_DNA"/>
</dbReference>
<dbReference type="EMBL" id="X85811">
    <property type="protein sequence ID" value="CAA59826.1"/>
    <property type="molecule type" value="Genomic_DNA"/>
</dbReference>
<dbReference type="EMBL" id="Z71367">
    <property type="protein sequence ID" value="CAA95967.1"/>
    <property type="molecule type" value="Genomic_DNA"/>
</dbReference>
<dbReference type="EMBL" id="BK006947">
    <property type="protein sequence ID" value="DAA10455.1"/>
    <property type="molecule type" value="Genomic_DNA"/>
</dbReference>
<dbReference type="PIR" id="S52734">
    <property type="entry name" value="S52734"/>
</dbReference>
<dbReference type="RefSeq" id="NP_014308.1">
    <property type="nucleotide sequence ID" value="NM_001182929.1"/>
</dbReference>
<dbReference type="SMR" id="P53935"/>
<dbReference type="BioGRID" id="35733">
    <property type="interactions" value="486"/>
</dbReference>
<dbReference type="DIP" id="DIP-872N"/>
<dbReference type="FunCoup" id="P53935">
    <property type="interactions" value="42"/>
</dbReference>
<dbReference type="IntAct" id="P53935">
    <property type="interactions" value="59"/>
</dbReference>
<dbReference type="MINT" id="P53935"/>
<dbReference type="STRING" id="4932.YNL091W"/>
<dbReference type="GlyGen" id="P53935">
    <property type="glycosylation" value="3 sites, 1 O-linked glycan (3 sites)"/>
</dbReference>
<dbReference type="iPTMnet" id="P53935"/>
<dbReference type="PaxDb" id="4932-YNL091W"/>
<dbReference type="PeptideAtlas" id="P53935"/>
<dbReference type="EnsemblFungi" id="YNL091W_mRNA">
    <property type="protein sequence ID" value="YNL091W"/>
    <property type="gene ID" value="YNL091W"/>
</dbReference>
<dbReference type="GeneID" id="855633"/>
<dbReference type="KEGG" id="sce:YNL091W"/>
<dbReference type="AGR" id="SGD:S000005035"/>
<dbReference type="SGD" id="S000005035">
    <property type="gene designation" value="NST1"/>
</dbReference>
<dbReference type="VEuPathDB" id="FungiDB:YNL091W"/>
<dbReference type="eggNOG" id="ENOG502QSSK">
    <property type="taxonomic scope" value="Eukaryota"/>
</dbReference>
<dbReference type="HOGENOM" id="CLU_267374_0_0_1"/>
<dbReference type="InParanoid" id="P53935"/>
<dbReference type="OMA" id="TLDSHWE"/>
<dbReference type="OrthoDB" id="21629at2759"/>
<dbReference type="BioCyc" id="YEAST:G3O-33119-MONOMER"/>
<dbReference type="BioGRID-ORCS" id="855633">
    <property type="hits" value="0 hits in 10 CRISPR screens"/>
</dbReference>
<dbReference type="PRO" id="PR:P53935"/>
<dbReference type="Proteomes" id="UP000002311">
    <property type="component" value="Chromosome XIV"/>
</dbReference>
<dbReference type="RNAct" id="P53935">
    <property type="molecule type" value="protein"/>
</dbReference>
<dbReference type="GO" id="GO:0005737">
    <property type="term" value="C:cytoplasm"/>
    <property type="evidence" value="ECO:0007005"/>
    <property type="project" value="SGD"/>
</dbReference>
<dbReference type="GO" id="GO:0000932">
    <property type="term" value="C:P-body"/>
    <property type="evidence" value="ECO:0000314"/>
    <property type="project" value="SGD"/>
</dbReference>
<dbReference type="GO" id="GO:0017148">
    <property type="term" value="P:negative regulation of translation"/>
    <property type="evidence" value="ECO:0000316"/>
    <property type="project" value="SGD"/>
</dbReference>
<dbReference type="GO" id="GO:0009651">
    <property type="term" value="P:response to salt stress"/>
    <property type="evidence" value="ECO:0000315"/>
    <property type="project" value="SGD"/>
</dbReference>
<dbReference type="InterPro" id="IPR051195">
    <property type="entry name" value="Fungal_stress_NST1"/>
</dbReference>
<dbReference type="InterPro" id="IPR025279">
    <property type="entry name" value="NST1"/>
</dbReference>
<dbReference type="PANTHER" id="PTHR31780:SF10">
    <property type="entry name" value="LD36051P"/>
    <property type="match status" value="1"/>
</dbReference>
<dbReference type="PANTHER" id="PTHR31780">
    <property type="entry name" value="STRESS RESPONSE PROTEIN NST1-RELATED"/>
    <property type="match status" value="1"/>
</dbReference>
<dbReference type="Pfam" id="PF13945">
    <property type="entry name" value="NST1"/>
    <property type="match status" value="1"/>
</dbReference>
<reference key="1">
    <citation type="journal article" date="2005" name="Nat. Genet.">
        <title>Quantitative trait loci mapped to single-nucleotide resolution in yeast.</title>
        <authorList>
            <person name="Deutschbauer A.M."/>
            <person name="Davis R.W."/>
        </authorList>
    </citation>
    <scope>NUCLEOTIDE SEQUENCE [GENOMIC DNA]</scope>
    <scope>VARIANTS ALA-162; GLY-208; ASP-354 AND ASP-899</scope>
    <source>
        <strain>SK1</strain>
    </source>
</reference>
<reference key="2">
    <citation type="journal article" date="1996" name="Yeast">
        <title>Sequence analysis of a 14.2 kb fragment of Saccharomyces cerevisiae chromosome XIV that includes the ypt53, tRNALeu and gsr m2 genes and four new open reading frames.</title>
        <authorList>
            <person name="Garcia-Cantalejo J.M."/>
            <person name="Boskovic J."/>
            <person name="Jimenez A."/>
        </authorList>
    </citation>
    <scope>NUCLEOTIDE SEQUENCE [GENOMIC DNA]</scope>
    <source>
        <strain>ATCC 96604 / S288c / FY1679</strain>
    </source>
</reference>
<reference key="3">
    <citation type="journal article" date="1997" name="Nature">
        <title>The nucleotide sequence of Saccharomyces cerevisiae chromosome XIV and its evolutionary implications.</title>
        <authorList>
            <person name="Philippsen P."/>
            <person name="Kleine K."/>
            <person name="Poehlmann R."/>
            <person name="Duesterhoeft A."/>
            <person name="Hamberg K."/>
            <person name="Hegemann J.H."/>
            <person name="Obermaier B."/>
            <person name="Urrestarazu L.A."/>
            <person name="Aert R."/>
            <person name="Albermann K."/>
            <person name="Altmann R."/>
            <person name="Andre B."/>
            <person name="Baladron V."/>
            <person name="Ballesta J.P.G."/>
            <person name="Becam A.-M."/>
            <person name="Beinhauer J.D."/>
            <person name="Boskovic J."/>
            <person name="Buitrago M.J."/>
            <person name="Bussereau F."/>
            <person name="Coster F."/>
            <person name="Crouzet M."/>
            <person name="D'Angelo M."/>
            <person name="Dal Pero F."/>
            <person name="De Antoni A."/>
            <person name="del Rey F."/>
            <person name="Doignon F."/>
            <person name="Domdey H."/>
            <person name="Dubois E."/>
            <person name="Fiedler T.A."/>
            <person name="Fleig U."/>
            <person name="Floeth M."/>
            <person name="Fritz C."/>
            <person name="Gaillardin C."/>
            <person name="Garcia-Cantalejo J.M."/>
            <person name="Glansdorff N."/>
            <person name="Goffeau A."/>
            <person name="Gueldener U."/>
            <person name="Herbert C.J."/>
            <person name="Heumann K."/>
            <person name="Heuss-Neitzel D."/>
            <person name="Hilbert H."/>
            <person name="Hinni K."/>
            <person name="Iraqui Houssaini I."/>
            <person name="Jacquet M."/>
            <person name="Jimenez A."/>
            <person name="Jonniaux J.-L."/>
            <person name="Karpfinger-Hartl L."/>
            <person name="Lanfranchi G."/>
            <person name="Lepingle A."/>
            <person name="Levesque H."/>
            <person name="Lyck R."/>
            <person name="Maftahi M."/>
            <person name="Mallet L."/>
            <person name="Maurer C.T.C."/>
            <person name="Messenguy F."/>
            <person name="Mewes H.-W."/>
            <person name="Moestl D."/>
            <person name="Nasr F."/>
            <person name="Nicaud J.-M."/>
            <person name="Niedenthal R.K."/>
            <person name="Pandolfo D."/>
            <person name="Pierard A."/>
            <person name="Piravandi E."/>
            <person name="Planta R.J."/>
            <person name="Pohl T.M."/>
            <person name="Purnelle B."/>
            <person name="Rebischung C."/>
            <person name="Remacha M.A."/>
            <person name="Revuelta J.L."/>
            <person name="Rinke M."/>
            <person name="Saiz J.E."/>
            <person name="Sartorello F."/>
            <person name="Scherens B."/>
            <person name="Sen-Gupta M."/>
            <person name="Soler-Mira A."/>
            <person name="Urbanus J.H.M."/>
            <person name="Valle G."/>
            <person name="Van Dyck L."/>
            <person name="Verhasselt P."/>
            <person name="Vierendeels F."/>
            <person name="Vissers S."/>
            <person name="Voet M."/>
            <person name="Volckaert G."/>
            <person name="Wach A."/>
            <person name="Wambutt R."/>
            <person name="Wedler H."/>
            <person name="Zollner A."/>
            <person name="Hani J."/>
        </authorList>
    </citation>
    <scope>NUCLEOTIDE SEQUENCE [LARGE SCALE GENOMIC DNA]</scope>
    <source>
        <strain>ATCC 204508 / S288c</strain>
    </source>
</reference>
<reference key="4">
    <citation type="journal article" date="2014" name="G3 (Bethesda)">
        <title>The reference genome sequence of Saccharomyces cerevisiae: Then and now.</title>
        <authorList>
            <person name="Engel S.R."/>
            <person name="Dietrich F.S."/>
            <person name="Fisk D.G."/>
            <person name="Binkley G."/>
            <person name="Balakrishnan R."/>
            <person name="Costanzo M.C."/>
            <person name="Dwight S.S."/>
            <person name="Hitz B.C."/>
            <person name="Karra K."/>
            <person name="Nash R.S."/>
            <person name="Weng S."/>
            <person name="Wong E.D."/>
            <person name="Lloyd P."/>
            <person name="Skrzypek M.S."/>
            <person name="Miyasato S.R."/>
            <person name="Simison M."/>
            <person name="Cherry J.M."/>
        </authorList>
    </citation>
    <scope>GENOME REANNOTATION</scope>
    <source>
        <strain>ATCC 204508 / S288c</strain>
    </source>
</reference>
<reference key="5">
    <citation type="journal article" date="2002" name="Yeast">
        <title>Involvement of Nst1p/YNL091w and Msl1p, a U2B'' splicing factor, in Saccharomyces cerevisiae salt tolerance.</title>
        <authorList>
            <person name="Goossens A."/>
            <person name="Forment J."/>
            <person name="Serrano R."/>
        </authorList>
    </citation>
    <scope>FUNCTION</scope>
</reference>
<reference key="6">
    <citation type="journal article" date="2003" name="Nature">
        <title>Global analysis of protein localization in budding yeast.</title>
        <authorList>
            <person name="Huh W.-K."/>
            <person name="Falvo J.V."/>
            <person name="Gerke L.C."/>
            <person name="Carroll A.S."/>
            <person name="Howson R.W."/>
            <person name="Weissman J.S."/>
            <person name="O'Shea E.K."/>
        </authorList>
    </citation>
    <scope>SUBCELLULAR LOCATION [LARGE SCALE ANALYSIS]</scope>
</reference>
<reference key="7">
    <citation type="journal article" date="2003" name="Nature">
        <title>Global analysis of protein expression in yeast.</title>
        <authorList>
            <person name="Ghaemmaghami S."/>
            <person name="Huh W.-K."/>
            <person name="Bower K."/>
            <person name="Howson R.W."/>
            <person name="Belle A."/>
            <person name="Dephoure N."/>
            <person name="O'Shea E.K."/>
            <person name="Weissman J.S."/>
        </authorList>
    </citation>
    <scope>LEVEL OF PROTEIN EXPRESSION [LARGE SCALE ANALYSIS]</scope>
</reference>
<reference key="8">
    <citation type="journal article" date="2007" name="J. Proteome Res.">
        <title>Large-scale phosphorylation analysis of alpha-factor-arrested Saccharomyces cerevisiae.</title>
        <authorList>
            <person name="Li X."/>
            <person name="Gerber S.A."/>
            <person name="Rudner A.D."/>
            <person name="Beausoleil S.A."/>
            <person name="Haas W."/>
            <person name="Villen J."/>
            <person name="Elias J.E."/>
            <person name="Gygi S.P."/>
        </authorList>
    </citation>
    <scope>IDENTIFICATION BY MASS SPECTROMETRY [LARGE SCALE ANALYSIS]</scope>
    <source>
        <strain>ADR376</strain>
    </source>
</reference>
<reference key="9">
    <citation type="journal article" date="2008" name="Mol. Cell. Proteomics">
        <title>A multidimensional chromatography technology for in-depth phosphoproteome analysis.</title>
        <authorList>
            <person name="Albuquerque C.P."/>
            <person name="Smolka M.B."/>
            <person name="Payne S.H."/>
            <person name="Bafna V."/>
            <person name="Eng J."/>
            <person name="Zhou H."/>
        </authorList>
    </citation>
    <scope>PHOSPHORYLATION [LARGE SCALE ANALYSIS] AT SER-266</scope>
    <scope>IDENTIFICATION BY MASS SPECTROMETRY [LARGE SCALE ANALYSIS]</scope>
</reference>
<reference key="10">
    <citation type="journal article" date="2009" name="Science">
        <title>Global analysis of Cdk1 substrate phosphorylation sites provides insights into evolution.</title>
        <authorList>
            <person name="Holt L.J."/>
            <person name="Tuch B.B."/>
            <person name="Villen J."/>
            <person name="Johnson A.D."/>
            <person name="Gygi S.P."/>
            <person name="Morgan D.O."/>
        </authorList>
    </citation>
    <scope>PHOSPHORYLATION [LARGE SCALE ANALYSIS] AT SER-266</scope>
    <scope>IDENTIFICATION BY MASS SPECTROMETRY [LARGE SCALE ANALYSIS]</scope>
</reference>
<reference key="11">
    <citation type="journal article" date="2012" name="Proc. Natl. Acad. Sci. U.S.A.">
        <title>N-terminal acetylome analyses and functional insights of the N-terminal acetyltransferase NatB.</title>
        <authorList>
            <person name="Van Damme P."/>
            <person name="Lasa M."/>
            <person name="Polevoda B."/>
            <person name="Gazquez C."/>
            <person name="Elosegui-Artola A."/>
            <person name="Kim D.S."/>
            <person name="De Juan-Pardo E."/>
            <person name="Demeyer K."/>
            <person name="Hole K."/>
            <person name="Larrea E."/>
            <person name="Timmerman E."/>
            <person name="Prieto J."/>
            <person name="Arnesen T."/>
            <person name="Sherman F."/>
            <person name="Gevaert K."/>
            <person name="Aldabe R."/>
        </authorList>
    </citation>
    <scope>IDENTIFICATION BY MASS SPECTROMETRY [LARGE SCALE ANALYSIS]</scope>
</reference>
<comment type="function">
    <text evidence="3">With MSL1, acts as a negative regulator of salt tolerance.</text>
</comment>
<comment type="subunit">
    <text>Interacts with MSL1.</text>
</comment>
<comment type="interaction">
    <interactant intactId="EBI-28788">
        <id>P53935</id>
    </interactant>
    <interactant intactId="EBI-28306">
        <id>P53829</id>
        <label>CAF40</label>
    </interactant>
    <organismsDiffer>false</organismsDiffer>
    <experiments>3</experiments>
</comment>
<comment type="interaction">
    <interactant intactId="EBI-28788">
        <id>P53935</id>
    </interactant>
    <interactant intactId="EBI-26750">
        <id>P36083</id>
        <label>YKL075C</label>
    </interactant>
    <organismsDiffer>false</organismsDiffer>
    <experiments>3</experiments>
</comment>
<comment type="subcellular location">
    <subcellularLocation>
        <location evidence="4">Cytoplasm</location>
    </subcellularLocation>
</comment>
<comment type="miscellaneous">
    <text evidence="5">Present with 217 molecules/cell in log phase SD medium.</text>
</comment>
<comment type="similarity">
    <text evidence="7">Belongs to the NST1 family.</text>
</comment>
<accession>P53935</accession>
<accession>D6W189</accession>
<accession>Q45TZ3</accession>
<keyword id="KW-0175">Coiled coil</keyword>
<keyword id="KW-0963">Cytoplasm</keyword>
<keyword id="KW-0597">Phosphoprotein</keyword>
<keyword id="KW-1185">Reference proteome</keyword>
<keyword id="KW-0346">Stress response</keyword>
<gene>
    <name type="primary">NST1</name>
    <name type="ordered locus">YNL091W</name>
    <name type="ORF">N2231</name>
</gene>
<evidence type="ECO:0000255" key="1"/>
<evidence type="ECO:0000256" key="2">
    <source>
        <dbReference type="SAM" id="MobiDB-lite"/>
    </source>
</evidence>
<evidence type="ECO:0000269" key="3">
    <source>
    </source>
</evidence>
<evidence type="ECO:0000269" key="4">
    <source>
    </source>
</evidence>
<evidence type="ECO:0000269" key="5">
    <source>
    </source>
</evidence>
<evidence type="ECO:0000269" key="6">
    <source>
    </source>
</evidence>
<evidence type="ECO:0000305" key="7"/>
<evidence type="ECO:0007744" key="8">
    <source>
    </source>
</evidence>
<evidence type="ECO:0007744" key="9">
    <source>
    </source>
</evidence>
<proteinExistence type="evidence at protein level"/>